<dbReference type="EC" id="1.1.1.25" evidence="1"/>
<dbReference type="EMBL" id="CP000444">
    <property type="protein sequence ID" value="ABI41041.1"/>
    <property type="molecule type" value="Genomic_DNA"/>
</dbReference>
<dbReference type="SMR" id="Q0I0R4"/>
<dbReference type="KEGG" id="shm:Shewmr7_0035"/>
<dbReference type="HOGENOM" id="CLU_044063_2_1_6"/>
<dbReference type="UniPathway" id="UPA00053">
    <property type="reaction ID" value="UER00087"/>
</dbReference>
<dbReference type="GO" id="GO:0005829">
    <property type="term" value="C:cytosol"/>
    <property type="evidence" value="ECO:0007669"/>
    <property type="project" value="TreeGrafter"/>
</dbReference>
<dbReference type="GO" id="GO:0050661">
    <property type="term" value="F:NADP binding"/>
    <property type="evidence" value="ECO:0007669"/>
    <property type="project" value="InterPro"/>
</dbReference>
<dbReference type="GO" id="GO:0004764">
    <property type="term" value="F:shikimate 3-dehydrogenase (NADP+) activity"/>
    <property type="evidence" value="ECO:0007669"/>
    <property type="project" value="UniProtKB-UniRule"/>
</dbReference>
<dbReference type="GO" id="GO:0008652">
    <property type="term" value="P:amino acid biosynthetic process"/>
    <property type="evidence" value="ECO:0007669"/>
    <property type="project" value="UniProtKB-KW"/>
</dbReference>
<dbReference type="GO" id="GO:0009073">
    <property type="term" value="P:aromatic amino acid family biosynthetic process"/>
    <property type="evidence" value="ECO:0007669"/>
    <property type="project" value="UniProtKB-KW"/>
</dbReference>
<dbReference type="GO" id="GO:0009423">
    <property type="term" value="P:chorismate biosynthetic process"/>
    <property type="evidence" value="ECO:0007669"/>
    <property type="project" value="UniProtKB-UniRule"/>
</dbReference>
<dbReference type="GO" id="GO:0019632">
    <property type="term" value="P:shikimate metabolic process"/>
    <property type="evidence" value="ECO:0007669"/>
    <property type="project" value="InterPro"/>
</dbReference>
<dbReference type="CDD" id="cd01065">
    <property type="entry name" value="NAD_bind_Shikimate_DH"/>
    <property type="match status" value="1"/>
</dbReference>
<dbReference type="FunFam" id="3.40.50.10860:FF:000006">
    <property type="entry name" value="Shikimate dehydrogenase (NADP(+))"/>
    <property type="match status" value="1"/>
</dbReference>
<dbReference type="FunFam" id="3.40.50.720:FF:000104">
    <property type="entry name" value="Shikimate dehydrogenase (NADP(+))"/>
    <property type="match status" value="1"/>
</dbReference>
<dbReference type="Gene3D" id="3.40.50.10860">
    <property type="entry name" value="Leucine Dehydrogenase, chain A, domain 1"/>
    <property type="match status" value="1"/>
</dbReference>
<dbReference type="Gene3D" id="3.40.50.720">
    <property type="entry name" value="NAD(P)-binding Rossmann-like Domain"/>
    <property type="match status" value="1"/>
</dbReference>
<dbReference type="HAMAP" id="MF_00222">
    <property type="entry name" value="Shikimate_DH_AroE"/>
    <property type="match status" value="1"/>
</dbReference>
<dbReference type="InterPro" id="IPR046346">
    <property type="entry name" value="Aminoacid_DH-like_N_sf"/>
</dbReference>
<dbReference type="InterPro" id="IPR036291">
    <property type="entry name" value="NAD(P)-bd_dom_sf"/>
</dbReference>
<dbReference type="InterPro" id="IPR041121">
    <property type="entry name" value="SDH_C"/>
</dbReference>
<dbReference type="InterPro" id="IPR011342">
    <property type="entry name" value="Shikimate_DH"/>
</dbReference>
<dbReference type="InterPro" id="IPR013708">
    <property type="entry name" value="Shikimate_DH-bd_N"/>
</dbReference>
<dbReference type="InterPro" id="IPR022893">
    <property type="entry name" value="Shikimate_DH_fam"/>
</dbReference>
<dbReference type="InterPro" id="IPR006151">
    <property type="entry name" value="Shikm_DH/Glu-tRNA_Rdtase"/>
</dbReference>
<dbReference type="NCBIfam" id="TIGR00507">
    <property type="entry name" value="aroE"/>
    <property type="match status" value="1"/>
</dbReference>
<dbReference type="NCBIfam" id="NF001310">
    <property type="entry name" value="PRK00258.1-2"/>
    <property type="match status" value="1"/>
</dbReference>
<dbReference type="PANTHER" id="PTHR21089:SF1">
    <property type="entry name" value="BIFUNCTIONAL 3-DEHYDROQUINATE DEHYDRATASE_SHIKIMATE DEHYDROGENASE, CHLOROPLASTIC"/>
    <property type="match status" value="1"/>
</dbReference>
<dbReference type="PANTHER" id="PTHR21089">
    <property type="entry name" value="SHIKIMATE DEHYDROGENASE"/>
    <property type="match status" value="1"/>
</dbReference>
<dbReference type="Pfam" id="PF18317">
    <property type="entry name" value="SDH_C"/>
    <property type="match status" value="1"/>
</dbReference>
<dbReference type="Pfam" id="PF01488">
    <property type="entry name" value="Shikimate_DH"/>
    <property type="match status" value="1"/>
</dbReference>
<dbReference type="Pfam" id="PF08501">
    <property type="entry name" value="Shikimate_dh_N"/>
    <property type="match status" value="1"/>
</dbReference>
<dbReference type="SUPFAM" id="SSF53223">
    <property type="entry name" value="Aminoacid dehydrogenase-like, N-terminal domain"/>
    <property type="match status" value="1"/>
</dbReference>
<dbReference type="SUPFAM" id="SSF51735">
    <property type="entry name" value="NAD(P)-binding Rossmann-fold domains"/>
    <property type="match status" value="1"/>
</dbReference>
<proteinExistence type="inferred from homology"/>
<gene>
    <name evidence="1" type="primary">aroE</name>
    <name type="ordered locus">Shewmr7_0035</name>
</gene>
<name>AROE_SHESR</name>
<protein>
    <recommendedName>
        <fullName evidence="1">Shikimate dehydrogenase (NADP(+))</fullName>
        <shortName evidence="1">SDH</shortName>
        <ecNumber evidence="1">1.1.1.25</ecNumber>
    </recommendedName>
</protein>
<organism>
    <name type="scientific">Shewanella sp. (strain MR-7)</name>
    <dbReference type="NCBI Taxonomy" id="60481"/>
    <lineage>
        <taxon>Bacteria</taxon>
        <taxon>Pseudomonadati</taxon>
        <taxon>Pseudomonadota</taxon>
        <taxon>Gammaproteobacteria</taxon>
        <taxon>Alteromonadales</taxon>
        <taxon>Shewanellaceae</taxon>
        <taxon>Shewanella</taxon>
    </lineage>
</organism>
<reference key="1">
    <citation type="submission" date="2006-08" db="EMBL/GenBank/DDBJ databases">
        <title>Complete sequence of chromosome 1 of Shewanella sp. MR-7.</title>
        <authorList>
            <person name="Copeland A."/>
            <person name="Lucas S."/>
            <person name="Lapidus A."/>
            <person name="Barry K."/>
            <person name="Detter J.C."/>
            <person name="Glavina del Rio T."/>
            <person name="Hammon N."/>
            <person name="Israni S."/>
            <person name="Dalin E."/>
            <person name="Tice H."/>
            <person name="Pitluck S."/>
            <person name="Kiss H."/>
            <person name="Brettin T."/>
            <person name="Bruce D."/>
            <person name="Han C."/>
            <person name="Tapia R."/>
            <person name="Gilna P."/>
            <person name="Schmutz J."/>
            <person name="Larimer F."/>
            <person name="Land M."/>
            <person name="Hauser L."/>
            <person name="Kyrpides N."/>
            <person name="Mikhailova N."/>
            <person name="Nealson K."/>
            <person name="Konstantinidis K."/>
            <person name="Klappenbach J."/>
            <person name="Tiedje J."/>
            <person name="Richardson P."/>
        </authorList>
    </citation>
    <scope>NUCLEOTIDE SEQUENCE [LARGE SCALE GENOMIC DNA]</scope>
    <source>
        <strain>MR-7</strain>
    </source>
</reference>
<feature type="chain" id="PRO_0000325170" description="Shikimate dehydrogenase (NADP(+))">
    <location>
        <begin position="1"/>
        <end position="292"/>
    </location>
</feature>
<feature type="active site" description="Proton acceptor" evidence="1">
    <location>
        <position position="76"/>
    </location>
</feature>
<feature type="binding site" evidence="1">
    <location>
        <begin position="25"/>
        <end position="27"/>
    </location>
    <ligand>
        <name>shikimate</name>
        <dbReference type="ChEBI" id="CHEBI:36208"/>
    </ligand>
</feature>
<feature type="binding site" evidence="1">
    <location>
        <position position="72"/>
    </location>
    <ligand>
        <name>shikimate</name>
        <dbReference type="ChEBI" id="CHEBI:36208"/>
    </ligand>
</feature>
<feature type="binding site" evidence="1">
    <location>
        <position position="97"/>
    </location>
    <ligand>
        <name>shikimate</name>
        <dbReference type="ChEBI" id="CHEBI:36208"/>
    </ligand>
</feature>
<feature type="binding site" evidence="1">
    <location>
        <position position="113"/>
    </location>
    <ligand>
        <name>shikimate</name>
        <dbReference type="ChEBI" id="CHEBI:36208"/>
    </ligand>
</feature>
<feature type="binding site" evidence="1">
    <location>
        <begin position="137"/>
        <end position="141"/>
    </location>
    <ligand>
        <name>NADP(+)</name>
        <dbReference type="ChEBI" id="CHEBI:58349"/>
    </ligand>
</feature>
<feature type="binding site" evidence="1">
    <location>
        <begin position="161"/>
        <end position="166"/>
    </location>
    <ligand>
        <name>NADP(+)</name>
        <dbReference type="ChEBI" id="CHEBI:58349"/>
    </ligand>
</feature>
<feature type="binding site" evidence="1">
    <location>
        <position position="230"/>
    </location>
    <ligand>
        <name>NADP(+)</name>
        <dbReference type="ChEBI" id="CHEBI:58349"/>
    </ligand>
</feature>
<feature type="binding site" evidence="1">
    <location>
        <position position="232"/>
    </location>
    <ligand>
        <name>shikimate</name>
        <dbReference type="ChEBI" id="CHEBI:36208"/>
    </ligand>
</feature>
<feature type="binding site" evidence="1">
    <location>
        <position position="254"/>
    </location>
    <ligand>
        <name>NADP(+)</name>
        <dbReference type="ChEBI" id="CHEBI:58349"/>
    </ligand>
</feature>
<keyword id="KW-0028">Amino-acid biosynthesis</keyword>
<keyword id="KW-0057">Aromatic amino acid biosynthesis</keyword>
<keyword id="KW-0521">NADP</keyword>
<keyword id="KW-0560">Oxidoreductase</keyword>
<comment type="function">
    <text evidence="1">Involved in the biosynthesis of the chorismate, which leads to the biosynthesis of aromatic amino acids. Catalyzes the reversible NADPH linked reduction of 3-dehydroshikimate (DHSA) to yield shikimate (SA).</text>
</comment>
<comment type="catalytic activity">
    <reaction evidence="1">
        <text>shikimate + NADP(+) = 3-dehydroshikimate + NADPH + H(+)</text>
        <dbReference type="Rhea" id="RHEA:17737"/>
        <dbReference type="ChEBI" id="CHEBI:15378"/>
        <dbReference type="ChEBI" id="CHEBI:16630"/>
        <dbReference type="ChEBI" id="CHEBI:36208"/>
        <dbReference type="ChEBI" id="CHEBI:57783"/>
        <dbReference type="ChEBI" id="CHEBI:58349"/>
        <dbReference type="EC" id="1.1.1.25"/>
    </reaction>
</comment>
<comment type="pathway">
    <text evidence="1">Metabolic intermediate biosynthesis; chorismate biosynthesis; chorismate from D-erythrose 4-phosphate and phosphoenolpyruvate: step 4/7.</text>
</comment>
<comment type="subunit">
    <text evidence="1">Homodimer.</text>
</comment>
<comment type="similarity">
    <text evidence="1">Belongs to the shikimate dehydrogenase family.</text>
</comment>
<evidence type="ECO:0000255" key="1">
    <source>
        <dbReference type="HAMAP-Rule" id="MF_00222"/>
    </source>
</evidence>
<accession>Q0I0R4</accession>
<sequence>MTDMPSVTTPALDRYAVFGNPIGHSKSPFIHGQFASITQQPLSYEAILAPIDGFEASLRAFFQAGGKGANVTVPFKEQAFALCDSLSAEATLAGAVNTLSLLADGTIYGDNTDGLGLVADLIRHLGSLQHKRVLLVGAGGAARGCILPLLKAEVGQLVITNRTQSKAQALVEIFSQVQQGRYSDKLQSMPMPELSGEFDLVINSTSASLAGELPPLPQSIIGNKTACYDMMYGAKPTAFNQWAVQQDAAQVIDGLGMLVGQAAKSFALWRGVEPDTSGVLKLLRDKLQADAQ</sequence>